<keyword id="KW-1185">Reference proteome</keyword>
<gene>
    <name type="primary">ZNF503-AS2</name>
    <name type="synonym">C10orf41</name>
    <name type="synonym">NCRNA00245</name>
</gene>
<name>ZNAS2_HUMAN</name>
<comment type="caution">
    <text evidence="2">Product of a dubious CDS prediction. May be a non-coding RNA.</text>
</comment>
<sequence length="195" mass="20902">MGVWGKKHLRLTHAPSPTFSHLPPSPQAGEPGIDGISLAVVCAAFIRIHPARRHPARNGSRLACTPTPRPNAGLEVVSSARVAASLPSEGGWTSGAPRSSGLSLPGSAWQPPPLPVLRKPAWPGSPAVKNESKFPNRGSRNFPRRRLPPAPVSGEPPERCKLAREIRWRLWKAHEGWGGGAKRPLGDPAWSGVKR</sequence>
<feature type="chain" id="PRO_0000316762" description="Putative uncharacterized protein encoded by ZNF503-AS2">
    <location>
        <begin position="1"/>
        <end position="195"/>
    </location>
</feature>
<feature type="region of interest" description="Disordered" evidence="1">
    <location>
        <begin position="86"/>
        <end position="158"/>
    </location>
</feature>
<organism>
    <name type="scientific">Homo sapiens</name>
    <name type="common">Human</name>
    <dbReference type="NCBI Taxonomy" id="9606"/>
    <lineage>
        <taxon>Eukaryota</taxon>
        <taxon>Metazoa</taxon>
        <taxon>Chordata</taxon>
        <taxon>Craniata</taxon>
        <taxon>Vertebrata</taxon>
        <taxon>Euteleostomi</taxon>
        <taxon>Mammalia</taxon>
        <taxon>Eutheria</taxon>
        <taxon>Euarchontoglires</taxon>
        <taxon>Primates</taxon>
        <taxon>Haplorrhini</taxon>
        <taxon>Catarrhini</taxon>
        <taxon>Hominidae</taxon>
        <taxon>Homo</taxon>
    </lineage>
</organism>
<dbReference type="EMBL" id="AC010997">
    <property type="status" value="NOT_ANNOTATED_CDS"/>
    <property type="molecule type" value="Genomic_DNA"/>
</dbReference>
<dbReference type="EMBL" id="BC017426">
    <property type="status" value="NOT_ANNOTATED_CDS"/>
    <property type="molecule type" value="mRNA"/>
</dbReference>
<dbReference type="BioMuta" id="HGNC:23525"/>
<dbReference type="MassIVE" id="A6NEH8"/>
<dbReference type="AGR" id="HGNC:23525"/>
<dbReference type="GeneCards" id="ZNF503-AS2"/>
<dbReference type="HGNC" id="HGNC:23525">
    <property type="gene designation" value="ZNF503-AS2"/>
</dbReference>
<dbReference type="neXtProt" id="NX_A6NEH8"/>
<dbReference type="InParanoid" id="A6NEH8"/>
<dbReference type="PAN-GO" id="A6NEH8">
    <property type="GO annotations" value="0 GO annotations based on evolutionary models"/>
</dbReference>
<dbReference type="PhylomeDB" id="A6NEH8"/>
<dbReference type="ChiTaRS" id="ZNF503-AS2">
    <property type="organism name" value="human"/>
</dbReference>
<dbReference type="Pharos" id="A6NEH8">
    <property type="development level" value="Tdark"/>
</dbReference>
<dbReference type="Proteomes" id="UP000005640">
    <property type="component" value="Unplaced"/>
</dbReference>
<dbReference type="RNAct" id="A6NEH8">
    <property type="molecule type" value="protein"/>
</dbReference>
<protein>
    <recommendedName>
        <fullName>Putative uncharacterized protein encoded by ZNF503-AS2</fullName>
    </recommendedName>
    <alternativeName>
        <fullName>ZNF503 antisense RNA 2</fullName>
    </alternativeName>
</protein>
<evidence type="ECO:0000256" key="1">
    <source>
        <dbReference type="SAM" id="MobiDB-lite"/>
    </source>
</evidence>
<evidence type="ECO:0000305" key="2"/>
<reference key="1">
    <citation type="journal article" date="2004" name="Nature">
        <title>The DNA sequence and comparative analysis of human chromosome 10.</title>
        <authorList>
            <person name="Deloukas P."/>
            <person name="Earthrowl M.E."/>
            <person name="Grafham D.V."/>
            <person name="Rubenfield M."/>
            <person name="French L."/>
            <person name="Steward C.A."/>
            <person name="Sims S.K."/>
            <person name="Jones M.C."/>
            <person name="Searle S."/>
            <person name="Scott C."/>
            <person name="Howe K."/>
            <person name="Hunt S.E."/>
            <person name="Andrews T.D."/>
            <person name="Gilbert J.G.R."/>
            <person name="Swarbreck D."/>
            <person name="Ashurst J.L."/>
            <person name="Taylor A."/>
            <person name="Battles J."/>
            <person name="Bird C.P."/>
            <person name="Ainscough R."/>
            <person name="Almeida J.P."/>
            <person name="Ashwell R.I.S."/>
            <person name="Ambrose K.D."/>
            <person name="Babbage A.K."/>
            <person name="Bagguley C.L."/>
            <person name="Bailey J."/>
            <person name="Banerjee R."/>
            <person name="Bates K."/>
            <person name="Beasley H."/>
            <person name="Bray-Allen S."/>
            <person name="Brown A.J."/>
            <person name="Brown J.Y."/>
            <person name="Burford D.C."/>
            <person name="Burrill W."/>
            <person name="Burton J."/>
            <person name="Cahill P."/>
            <person name="Camire D."/>
            <person name="Carter N.P."/>
            <person name="Chapman J.C."/>
            <person name="Clark S.Y."/>
            <person name="Clarke G."/>
            <person name="Clee C.M."/>
            <person name="Clegg S."/>
            <person name="Corby N."/>
            <person name="Coulson A."/>
            <person name="Dhami P."/>
            <person name="Dutta I."/>
            <person name="Dunn M."/>
            <person name="Faulkner L."/>
            <person name="Frankish A."/>
            <person name="Frankland J.A."/>
            <person name="Garner P."/>
            <person name="Garnett J."/>
            <person name="Gribble S."/>
            <person name="Griffiths C."/>
            <person name="Grocock R."/>
            <person name="Gustafson E."/>
            <person name="Hammond S."/>
            <person name="Harley J.L."/>
            <person name="Hart E."/>
            <person name="Heath P.D."/>
            <person name="Ho T.P."/>
            <person name="Hopkins B."/>
            <person name="Horne J."/>
            <person name="Howden P.J."/>
            <person name="Huckle E."/>
            <person name="Hynds C."/>
            <person name="Johnson C."/>
            <person name="Johnson D."/>
            <person name="Kana A."/>
            <person name="Kay M."/>
            <person name="Kimberley A.M."/>
            <person name="Kershaw J.K."/>
            <person name="Kokkinaki M."/>
            <person name="Laird G.K."/>
            <person name="Lawlor S."/>
            <person name="Lee H.M."/>
            <person name="Leongamornlert D.A."/>
            <person name="Laird G."/>
            <person name="Lloyd C."/>
            <person name="Lloyd D.M."/>
            <person name="Loveland J."/>
            <person name="Lovell J."/>
            <person name="McLaren S."/>
            <person name="McLay K.E."/>
            <person name="McMurray A."/>
            <person name="Mashreghi-Mohammadi M."/>
            <person name="Matthews L."/>
            <person name="Milne S."/>
            <person name="Nickerson T."/>
            <person name="Nguyen M."/>
            <person name="Overton-Larty E."/>
            <person name="Palmer S.A."/>
            <person name="Pearce A.V."/>
            <person name="Peck A.I."/>
            <person name="Pelan S."/>
            <person name="Phillimore B."/>
            <person name="Porter K."/>
            <person name="Rice C.M."/>
            <person name="Rogosin A."/>
            <person name="Ross M.T."/>
            <person name="Sarafidou T."/>
            <person name="Sehra H.K."/>
            <person name="Shownkeen R."/>
            <person name="Skuce C.D."/>
            <person name="Smith M."/>
            <person name="Standring L."/>
            <person name="Sycamore N."/>
            <person name="Tester J."/>
            <person name="Thorpe A."/>
            <person name="Torcasso W."/>
            <person name="Tracey A."/>
            <person name="Tromans A."/>
            <person name="Tsolas J."/>
            <person name="Wall M."/>
            <person name="Walsh J."/>
            <person name="Wang H."/>
            <person name="Weinstock K."/>
            <person name="West A.P."/>
            <person name="Willey D.L."/>
            <person name="Whitehead S.L."/>
            <person name="Wilming L."/>
            <person name="Wray P.W."/>
            <person name="Young L."/>
            <person name="Chen Y."/>
            <person name="Lovering R.C."/>
            <person name="Moschonas N.K."/>
            <person name="Siebert R."/>
            <person name="Fechtel K."/>
            <person name="Bentley D."/>
            <person name="Durbin R.M."/>
            <person name="Hubbard T."/>
            <person name="Doucette-Stamm L."/>
            <person name="Beck S."/>
            <person name="Smith D.R."/>
            <person name="Rogers J."/>
        </authorList>
    </citation>
    <scope>NUCLEOTIDE SEQUENCE [LARGE SCALE GENOMIC DNA]</scope>
</reference>
<reference key="2">
    <citation type="journal article" date="2004" name="Genome Res.">
        <title>The status, quality, and expansion of the NIH full-length cDNA project: the Mammalian Gene Collection (MGC).</title>
        <authorList>
            <consortium name="The MGC Project Team"/>
        </authorList>
    </citation>
    <scope>NUCLEOTIDE SEQUENCE [LARGE SCALE MRNA]</scope>
    <source>
        <tissue>Lung</tissue>
    </source>
</reference>
<proteinExistence type="uncertain"/>
<accession>A6NEH8</accession>